<reference key="1">
    <citation type="journal article" date="2004" name="Nature">
        <title>Sequence and comparative analysis of the chicken genome provide unique perspectives on vertebrate evolution.</title>
        <authorList>
            <person name="Hillier L.W."/>
            <person name="Miller W."/>
            <person name="Birney E."/>
            <person name="Warren W."/>
            <person name="Hardison R.C."/>
            <person name="Ponting C.P."/>
            <person name="Bork P."/>
            <person name="Burt D.W."/>
            <person name="Groenen M.A.M."/>
            <person name="Delany M.E."/>
            <person name="Dodgson J.B."/>
            <person name="Chinwalla A.T."/>
            <person name="Cliften P.F."/>
            <person name="Clifton S.W."/>
            <person name="Delehaunty K.D."/>
            <person name="Fronick C."/>
            <person name="Fulton R.S."/>
            <person name="Graves T.A."/>
            <person name="Kremitzki C."/>
            <person name="Layman D."/>
            <person name="Magrini V."/>
            <person name="McPherson J.D."/>
            <person name="Miner T.L."/>
            <person name="Minx P."/>
            <person name="Nash W.E."/>
            <person name="Nhan M.N."/>
            <person name="Nelson J.O."/>
            <person name="Oddy L.G."/>
            <person name="Pohl C.S."/>
            <person name="Randall-Maher J."/>
            <person name="Smith S.M."/>
            <person name="Wallis J.W."/>
            <person name="Yang S.-P."/>
            <person name="Romanov M.N."/>
            <person name="Rondelli C.M."/>
            <person name="Paton B."/>
            <person name="Smith J."/>
            <person name="Morrice D."/>
            <person name="Daniels L."/>
            <person name="Tempest H.G."/>
            <person name="Robertson L."/>
            <person name="Masabanda J.S."/>
            <person name="Griffin D.K."/>
            <person name="Vignal A."/>
            <person name="Fillon V."/>
            <person name="Jacobbson L."/>
            <person name="Kerje S."/>
            <person name="Andersson L."/>
            <person name="Crooijmans R.P."/>
            <person name="Aerts J."/>
            <person name="van der Poel J.J."/>
            <person name="Ellegren H."/>
            <person name="Caldwell R.B."/>
            <person name="Hubbard S.J."/>
            <person name="Grafham D.V."/>
            <person name="Kierzek A.M."/>
            <person name="McLaren S.R."/>
            <person name="Overton I.M."/>
            <person name="Arakawa H."/>
            <person name="Beattie K.J."/>
            <person name="Bezzubov Y."/>
            <person name="Boardman P.E."/>
            <person name="Bonfield J.K."/>
            <person name="Croning M.D.R."/>
            <person name="Davies R.M."/>
            <person name="Francis M.D."/>
            <person name="Humphray S.J."/>
            <person name="Scott C.E."/>
            <person name="Taylor R.G."/>
            <person name="Tickle C."/>
            <person name="Brown W.R.A."/>
            <person name="Rogers J."/>
            <person name="Buerstedde J.-M."/>
            <person name="Wilson S.A."/>
            <person name="Stubbs L."/>
            <person name="Ovcharenko I."/>
            <person name="Gordon L."/>
            <person name="Lucas S."/>
            <person name="Miller M.M."/>
            <person name="Inoko H."/>
            <person name="Shiina T."/>
            <person name="Kaufman J."/>
            <person name="Salomonsen J."/>
            <person name="Skjoedt K."/>
            <person name="Wong G.K.-S."/>
            <person name="Wang J."/>
            <person name="Liu B."/>
            <person name="Wang J."/>
            <person name="Yu J."/>
            <person name="Yang H."/>
            <person name="Nefedov M."/>
            <person name="Koriabine M."/>
            <person name="Dejong P.J."/>
            <person name="Goodstadt L."/>
            <person name="Webber C."/>
            <person name="Dickens N.J."/>
            <person name="Letunic I."/>
            <person name="Suyama M."/>
            <person name="Torrents D."/>
            <person name="von Mering C."/>
            <person name="Zdobnov E.M."/>
            <person name="Makova K."/>
            <person name="Nekrutenko A."/>
            <person name="Elnitski L."/>
            <person name="Eswara P."/>
            <person name="King D.C."/>
            <person name="Yang S.-P."/>
            <person name="Tyekucheva S."/>
            <person name="Radakrishnan A."/>
            <person name="Harris R.S."/>
            <person name="Chiaromonte F."/>
            <person name="Taylor J."/>
            <person name="He J."/>
            <person name="Rijnkels M."/>
            <person name="Griffiths-Jones S."/>
            <person name="Ureta-Vidal A."/>
            <person name="Hoffman M.M."/>
            <person name="Severin J."/>
            <person name="Searle S.M.J."/>
            <person name="Law A.S."/>
            <person name="Speed D."/>
            <person name="Waddington D."/>
            <person name="Cheng Z."/>
            <person name="Tuzun E."/>
            <person name="Eichler E."/>
            <person name="Bao Z."/>
            <person name="Flicek P."/>
            <person name="Shteynberg D.D."/>
            <person name="Brent M.R."/>
            <person name="Bye J.M."/>
            <person name="Huckle E.J."/>
            <person name="Chatterji S."/>
            <person name="Dewey C."/>
            <person name="Pachter L."/>
            <person name="Kouranov A."/>
            <person name="Mourelatos Z."/>
            <person name="Hatzigeorgiou A.G."/>
            <person name="Paterson A.H."/>
            <person name="Ivarie R."/>
            <person name="Brandstrom M."/>
            <person name="Axelsson E."/>
            <person name="Backstrom N."/>
            <person name="Berlin S."/>
            <person name="Webster M.T."/>
            <person name="Pourquie O."/>
            <person name="Reymond A."/>
            <person name="Ucla C."/>
            <person name="Antonarakis S.E."/>
            <person name="Long M."/>
            <person name="Emerson J.J."/>
            <person name="Betran E."/>
            <person name="Dupanloup I."/>
            <person name="Kaessmann H."/>
            <person name="Hinrichs A.S."/>
            <person name="Bejerano G."/>
            <person name="Furey T.S."/>
            <person name="Harte R.A."/>
            <person name="Raney B."/>
            <person name="Siepel A."/>
            <person name="Kent W.J."/>
            <person name="Haussler D."/>
            <person name="Eyras E."/>
            <person name="Castelo R."/>
            <person name="Abril J.F."/>
            <person name="Castellano S."/>
            <person name="Camara F."/>
            <person name="Parra G."/>
            <person name="Guigo R."/>
            <person name="Bourque G."/>
            <person name="Tesler G."/>
            <person name="Pevzner P.A."/>
            <person name="Smit A."/>
            <person name="Fulton L.A."/>
            <person name="Mardis E.R."/>
            <person name="Wilson R.K."/>
        </authorList>
    </citation>
    <scope>NUCLEOTIDE SEQUENCE [LARGE SCALE GENOMIC DNA]</scope>
    <source>
        <strain>Red jungle fowl</strain>
    </source>
</reference>
<reference key="2">
    <citation type="journal article" date="2013" name="Science">
        <title>GDE2 promotes neurogenesis by glycosylphosphatidylinositol-anchor cleavage of RECK.</title>
        <authorList>
            <person name="Park S."/>
            <person name="Lee C."/>
            <person name="Sabharwal P."/>
            <person name="Zhang M."/>
            <person name="Meyers C.L."/>
            <person name="Sockanathan S."/>
        </authorList>
    </citation>
    <scope>SUBCELLULAR LOCATION</scope>
    <scope>GPI-ANCHOR</scope>
</reference>
<keyword id="KW-1003">Cell membrane</keyword>
<keyword id="KW-1015">Disulfide bond</keyword>
<keyword id="KW-0325">Glycoprotein</keyword>
<keyword id="KW-0336">GPI-anchor</keyword>
<keyword id="KW-0449">Lipoprotein</keyword>
<keyword id="KW-0472">Membrane</keyword>
<keyword id="KW-0646">Protease inhibitor</keyword>
<keyword id="KW-1185">Reference proteome</keyword>
<keyword id="KW-0677">Repeat</keyword>
<keyword id="KW-0722">Serine protease inhibitor</keyword>
<keyword id="KW-0732">Signal</keyword>
<keyword id="KW-0879">Wnt signaling pathway</keyword>
<organism>
    <name type="scientific">Gallus gallus</name>
    <name type="common">Chicken</name>
    <dbReference type="NCBI Taxonomy" id="9031"/>
    <lineage>
        <taxon>Eukaryota</taxon>
        <taxon>Metazoa</taxon>
        <taxon>Chordata</taxon>
        <taxon>Craniata</taxon>
        <taxon>Vertebrata</taxon>
        <taxon>Euteleostomi</taxon>
        <taxon>Archelosauria</taxon>
        <taxon>Archosauria</taxon>
        <taxon>Dinosauria</taxon>
        <taxon>Saurischia</taxon>
        <taxon>Theropoda</taxon>
        <taxon>Coelurosauria</taxon>
        <taxon>Aves</taxon>
        <taxon>Neognathae</taxon>
        <taxon>Galloanserae</taxon>
        <taxon>Galliformes</taxon>
        <taxon>Phasianidae</taxon>
        <taxon>Phasianinae</taxon>
        <taxon>Gallus</taxon>
    </lineage>
</organism>
<accession>A0A1D5PUP4</accession>
<accession>A0A1D5PTW4</accession>
<sequence>MAAAVAAWPWALFCLAAVPPLLSPGAAGLSCCYHAKDNLMCRDVCEQILSSKSDSRLKHLLQRAPEYCPESMGEVWGCINSSLPGVLKKSDGWVGLGCCELAIAVECRQACKQASSKNDILKVCRKEYENALFSCINRNEMGSICCSYAGHHTNCREYCQAIFRTDSSPGPSQIKAVENYCASISPQLIHCVNNYTQSYPMRNPTDSLYCCDRAEDYACQTACKRILMSMKTELEIVDGLIEGCKTMPLPQDPLWQCFLESSRSVHPGVTVHPPPSTGLDGAKLHCCSKANSSTCRELCTKLYSTSWGSSQSWQEFDRFCEYNAVEVSMLTCLADVREPCQLGCRNLSYCTNFNNRPTELFRSCNSQSDQGAMNDMKLWEKGSIKMPFINIPVLDINKCQPEMWKAIACSLQIKPCHSKSRGSIICKSDCVEILKKCGDHNKFPEGHTAESICELLSPTDDLENCIPLDTYLSPSSLGNIVEDVTHPCNPNPCAANQLCEVNRKGCQSGELCLPYLCVPGCKLGEASDFIVRQGTLIQVPSSAGDVGCYKICTCGHTGLLENCVEMHCVDLQKSCIVGGQKKSHGTSFNIDCNVCSCFAGNLICSTRQCLTEHSSEDERQKFTGLPCNCVDQFVPVCGQNGRTYPSACIARCVGLQDNQFEFGSCISKDPCNPNPCSKNQRCIPKKQVCLTSFGKFECSQHECVPRQLNCDQTQDPVCDTDSVEYSNVCTLYQKGKNLAYRGPCQPFCKSVEPVCGHNGETYSSVCAAYSDRVAVDYYGHCQAVGVLSDYGFHTECAFVKCPQLSATGCKPVIAPGACCPLCAGMLRILYDKDKLDNFARVTNKKPITVLDILEKLRLHVSVPQCDVFGYLSIESEIVILIIPVDQKPKPLQIEACNKEAEKIESLINSDSPTLASHVPLSALIASQVQVSFSISSPSVKVGPVLHCLFISFSFTLLKLMDYI</sequence>
<comment type="function">
    <text evidence="1 2">Functions together with ADGRA2 to enable brain endothelial cells to selectively respond to Wnt7 signals (WNT7A or WNT7B) (By similarity). Plays a key role in Wnt7-specific responses: required for central nervous system (CNS) angiogenesis and blood-brain barrier regulation (By similarity). Acts as a Wnt7-specific coactivator of canonical Wnt signaling by decoding Wnt ligands: acts by interacting specifically with the disordered linker region of Wnt7, thereby conferring ligand selectivity for Wnt7. ADGRA2 is then required to deliver RECK-bound Wnt7 to frizzled by assembling a higher-order RECK-ADGRA2-Fzd-LRP5-LRP6 complex. Also acts as a serine protease inhibitor (By similarity).</text>
</comment>
<comment type="subunit">
    <text evidence="1">Interacts (via knot repeats) with WNT7A (via disordered linker region); the interaction is direct (By similarity). Interacts (via knot repeats) with WNT7B (via disordered linker region); the interaction is direct (By similarity). Interacts with ADGRA2; the interaction is direct (By similarity).</text>
</comment>
<comment type="subcellular location">
    <subcellularLocation>
        <location evidence="6">Cell membrane</location>
        <topology evidence="6">Lipid-anchor</topology>
        <topology evidence="6">GPI-anchor</topology>
    </subcellularLocation>
</comment>
<comment type="domain">
    <text evidence="1">The Kazal-like domains mediate the serine protease inhibitor activity.</text>
</comment>
<comment type="PTM">
    <text evidence="6">Localizes to the plasma membrane via its GPI-anchor (PubMed:23329048). Released from the plasma membrane following cleavage of the GPI-anchor by GDPD5/GPE2 (PubMed:23329048).</text>
</comment>
<comment type="similarity">
    <text evidence="8">Belongs to the RECK family.</text>
</comment>
<evidence type="ECO:0000250" key="1">
    <source>
        <dbReference type="UniProtKB" id="O95980"/>
    </source>
</evidence>
<evidence type="ECO:0000250" key="2">
    <source>
        <dbReference type="UniProtKB" id="Q9Z0J1"/>
    </source>
</evidence>
<evidence type="ECO:0000255" key="3"/>
<evidence type="ECO:0000255" key="4">
    <source>
        <dbReference type="PROSITE-ProRule" id="PRU00498"/>
    </source>
</evidence>
<evidence type="ECO:0000255" key="5">
    <source>
        <dbReference type="PROSITE-ProRule" id="PRU00798"/>
    </source>
</evidence>
<evidence type="ECO:0000269" key="6">
    <source>
    </source>
</evidence>
<evidence type="ECO:0000303" key="7">
    <source>
    </source>
</evidence>
<evidence type="ECO:0000305" key="8"/>
<feature type="signal peptide" evidence="3">
    <location>
        <begin position="1"/>
        <end position="28"/>
    </location>
</feature>
<feature type="chain" id="PRO_5008927880" description="Reversion-inducing cysteine-rich protein with Kazal motifs" evidence="3">
    <location>
        <begin position="29"/>
        <end position="936"/>
    </location>
</feature>
<feature type="propeptide" id="PRO_0000445619" evidence="3">
    <location>
        <begin position="937"/>
        <end position="963"/>
    </location>
</feature>
<feature type="repeat" description="Knot 1" evidence="1">
    <location>
        <begin position="31"/>
        <end position="78"/>
    </location>
</feature>
<feature type="repeat" description="Knot 2" evidence="1">
    <location>
        <begin position="98"/>
        <end position="135"/>
    </location>
</feature>
<feature type="repeat" description="Knot 3" evidence="1">
    <location>
        <begin position="145"/>
        <end position="191"/>
    </location>
</feature>
<feature type="repeat" description="Knot 4" evidence="1">
    <location>
        <begin position="210"/>
        <end position="257"/>
    </location>
</feature>
<feature type="repeat" description="Knot 5" evidence="1">
    <location>
        <begin position="286"/>
        <end position="332"/>
    </location>
</feature>
<feature type="domain" description="Kazal-like 1" evidence="5">
    <location>
        <begin position="621"/>
        <end position="667"/>
    </location>
</feature>
<feature type="domain" description="Kazal-like 2" evidence="5">
    <location>
        <begin position="692"/>
        <end position="746"/>
    </location>
</feature>
<feature type="domain" description="Kazal-like 3" evidence="5">
    <location>
        <begin position="749"/>
        <end position="783"/>
    </location>
</feature>
<feature type="region of interest" description="5 X Knot repeats" evidence="1">
    <location>
        <begin position="31"/>
        <end position="332"/>
    </location>
</feature>
<feature type="site" description="Reactive bond" evidence="5">
    <location>
        <begin position="631"/>
        <end position="632"/>
    </location>
</feature>
<feature type="site" description="Reactive bond" evidence="5">
    <location>
        <begin position="712"/>
        <end position="713"/>
    </location>
</feature>
<feature type="site" description="Reactive bond" evidence="5">
    <location>
        <begin position="749"/>
        <end position="750"/>
    </location>
</feature>
<feature type="lipid moiety-binding region" description="GPI-anchor amidated serine" evidence="3">
    <location>
        <position position="936"/>
    </location>
</feature>
<feature type="glycosylation site" description="N-linked (GlcNAc...) asparagine" evidence="4">
    <location>
        <position position="80"/>
    </location>
</feature>
<feature type="glycosylation site" description="N-linked (GlcNAc...) asparagine" evidence="4">
    <location>
        <position position="194"/>
    </location>
</feature>
<feature type="glycosylation site" description="N-linked (GlcNAc...) asparagine" evidence="4">
    <location>
        <position position="291"/>
    </location>
</feature>
<feature type="glycosylation site" description="N-linked (GlcNAc...) asparagine" evidence="4">
    <location>
        <position position="346"/>
    </location>
</feature>
<feature type="disulfide bond" evidence="5">
    <location>
        <begin position="627"/>
        <end position="652"/>
    </location>
</feature>
<feature type="disulfide bond" evidence="5">
    <location>
        <begin position="629"/>
        <end position="648"/>
    </location>
</feature>
<feature type="disulfide bond" evidence="5">
    <location>
        <begin position="637"/>
        <end position="665"/>
    </location>
</feature>
<feature type="disulfide bond" evidence="5">
    <location>
        <begin position="710"/>
        <end position="729"/>
    </location>
</feature>
<feature type="disulfide bond" evidence="5">
    <location>
        <begin position="718"/>
        <end position="744"/>
    </location>
</feature>
<feature type="disulfide bond" evidence="5">
    <location>
        <begin position="755"/>
        <end position="781"/>
    </location>
</feature>
<protein>
    <recommendedName>
        <fullName evidence="7">Reversion-inducing cysteine-rich protein with Kazal motifs</fullName>
    </recommendedName>
</protein>
<dbReference type="EMBL" id="AADN04000072">
    <property type="status" value="NOT_ANNOTATED_CDS"/>
    <property type="molecule type" value="Genomic_DNA"/>
</dbReference>
<dbReference type="RefSeq" id="XP_040520505.1">
    <property type="nucleotide sequence ID" value="XM_040664571.2"/>
</dbReference>
<dbReference type="RefSeq" id="XP_418897.4">
    <property type="nucleotide sequence ID" value="XM_418897.5"/>
</dbReference>
<dbReference type="SMR" id="A0A1D5PUP4"/>
<dbReference type="FunCoup" id="A0A1D5PUP4">
    <property type="interactions" value="159"/>
</dbReference>
<dbReference type="STRING" id="9031.ENSGALP00000056648"/>
<dbReference type="GlyCosmos" id="A0A1D5PUP4">
    <property type="glycosylation" value="4 sites, No reported glycans"/>
</dbReference>
<dbReference type="GlyGen" id="A0A1D5PUP4">
    <property type="glycosylation" value="4 sites"/>
</dbReference>
<dbReference type="PaxDb" id="9031-ENSGALP00000020581"/>
<dbReference type="GeneID" id="420804"/>
<dbReference type="KEGG" id="gga:420804"/>
<dbReference type="CTD" id="8434"/>
<dbReference type="VEuPathDB" id="HostDB:geneid_420804"/>
<dbReference type="eggNOG" id="KOG3649">
    <property type="taxonomic scope" value="Eukaryota"/>
</dbReference>
<dbReference type="InParanoid" id="A0A1D5PUP4"/>
<dbReference type="OrthoDB" id="5956770at2759"/>
<dbReference type="Reactome" id="R-GGA-163125">
    <property type="pathway name" value="Post-translational modification: synthesis of GPI-anchored proteins"/>
</dbReference>
<dbReference type="PRO" id="PR:A0A1D5PUP4"/>
<dbReference type="Proteomes" id="UP000000539">
    <property type="component" value="Chromosome 2"/>
</dbReference>
<dbReference type="Bgee" id="ENSGALG00000036829">
    <property type="expression patterns" value="Expressed in spermatocyte and 13 other cell types or tissues"/>
</dbReference>
<dbReference type="GO" id="GO:0005615">
    <property type="term" value="C:extracellular space"/>
    <property type="evidence" value="ECO:0007669"/>
    <property type="project" value="UniProtKB-ARBA"/>
</dbReference>
<dbReference type="GO" id="GO:0005886">
    <property type="term" value="C:plasma membrane"/>
    <property type="evidence" value="ECO:0000250"/>
    <property type="project" value="UniProtKB"/>
</dbReference>
<dbReference type="GO" id="GO:0098552">
    <property type="term" value="C:side of membrane"/>
    <property type="evidence" value="ECO:0007669"/>
    <property type="project" value="UniProtKB-KW"/>
</dbReference>
<dbReference type="GO" id="GO:1990909">
    <property type="term" value="C:Wnt signalosome"/>
    <property type="evidence" value="ECO:0000250"/>
    <property type="project" value="UniProtKB"/>
</dbReference>
<dbReference type="GO" id="GO:0015026">
    <property type="term" value="F:coreceptor activity"/>
    <property type="evidence" value="ECO:0000250"/>
    <property type="project" value="UniProtKB"/>
</dbReference>
<dbReference type="GO" id="GO:0004866">
    <property type="term" value="F:endopeptidase inhibitor activity"/>
    <property type="evidence" value="ECO:0000318"/>
    <property type="project" value="GO_Central"/>
</dbReference>
<dbReference type="GO" id="GO:0008191">
    <property type="term" value="F:metalloendopeptidase inhibitor activity"/>
    <property type="evidence" value="ECO:0000250"/>
    <property type="project" value="UniProtKB"/>
</dbReference>
<dbReference type="GO" id="GO:0004867">
    <property type="term" value="F:serine-type endopeptidase inhibitor activity"/>
    <property type="evidence" value="ECO:0007669"/>
    <property type="project" value="UniProtKB-KW"/>
</dbReference>
<dbReference type="GO" id="GO:0001955">
    <property type="term" value="P:blood vessel maturation"/>
    <property type="evidence" value="ECO:0000318"/>
    <property type="project" value="GO_Central"/>
</dbReference>
<dbReference type="GO" id="GO:0060070">
    <property type="term" value="P:canonical Wnt signaling pathway"/>
    <property type="evidence" value="ECO:0000250"/>
    <property type="project" value="UniProtKB"/>
</dbReference>
<dbReference type="GO" id="GO:0030198">
    <property type="term" value="P:extracellular matrix organization"/>
    <property type="evidence" value="ECO:0000318"/>
    <property type="project" value="GO_Central"/>
</dbReference>
<dbReference type="GO" id="GO:1904684">
    <property type="term" value="P:negative regulation of metalloendopeptidase activity"/>
    <property type="evidence" value="ECO:0000250"/>
    <property type="project" value="UniProtKB"/>
</dbReference>
<dbReference type="GO" id="GO:0045765">
    <property type="term" value="P:regulation of angiogenesis"/>
    <property type="evidence" value="ECO:0000250"/>
    <property type="project" value="UniProtKB"/>
</dbReference>
<dbReference type="GO" id="GO:0060828">
    <property type="term" value="P:regulation of canonical Wnt signaling pathway"/>
    <property type="evidence" value="ECO:0000318"/>
    <property type="project" value="GO_Central"/>
</dbReference>
<dbReference type="GO" id="GO:0090210">
    <property type="term" value="P:regulation of establishment of blood-brain barrier"/>
    <property type="evidence" value="ECO:0000250"/>
    <property type="project" value="UniProtKB"/>
</dbReference>
<dbReference type="GO" id="GO:0002040">
    <property type="term" value="P:sprouting angiogenesis"/>
    <property type="evidence" value="ECO:0000318"/>
    <property type="project" value="GO_Central"/>
</dbReference>
<dbReference type="FunFam" id="3.30.60.30:FF:000011">
    <property type="entry name" value="reversion-inducing cysteine-rich protein with Kazal motifs isoform X1"/>
    <property type="match status" value="1"/>
</dbReference>
<dbReference type="FunFam" id="3.30.60.30:FF:000021">
    <property type="entry name" value="reversion-inducing cysteine-rich protein with Kazal motifs isoform X1"/>
    <property type="match status" value="1"/>
</dbReference>
<dbReference type="Gene3D" id="3.30.60.30">
    <property type="match status" value="3"/>
</dbReference>
<dbReference type="InterPro" id="IPR056978">
    <property type="entry name" value="CC4_RECK"/>
</dbReference>
<dbReference type="InterPro" id="IPR056976">
    <property type="entry name" value="EGF1_RECK"/>
</dbReference>
<dbReference type="InterPro" id="IPR055134">
    <property type="entry name" value="EGF2_RECK_dom"/>
</dbReference>
<dbReference type="InterPro" id="IPR056977">
    <property type="entry name" value="FnI_RECK"/>
</dbReference>
<dbReference type="InterPro" id="IPR056979">
    <property type="entry name" value="FZ_RECK"/>
</dbReference>
<dbReference type="InterPro" id="IPR002350">
    <property type="entry name" value="Kazal_dom"/>
</dbReference>
<dbReference type="InterPro" id="IPR036058">
    <property type="entry name" value="Kazal_dom_sf"/>
</dbReference>
<dbReference type="InterPro" id="IPR039016">
    <property type="entry name" value="RECK"/>
</dbReference>
<dbReference type="InterPro" id="IPR055110">
    <property type="entry name" value="RECK-like_N"/>
</dbReference>
<dbReference type="PANTHER" id="PTHR13487:SF3">
    <property type="entry name" value="REVERSION-INDUCING CYSTEINE-RICH PROTEIN WITH KAZAL MOTIFS"/>
    <property type="match status" value="1"/>
</dbReference>
<dbReference type="PANTHER" id="PTHR13487">
    <property type="entry name" value="SERINE PROTEASE INHIBITOR"/>
    <property type="match status" value="1"/>
</dbReference>
<dbReference type="Pfam" id="PF23332">
    <property type="entry name" value="CC4_RECK"/>
    <property type="match status" value="2"/>
</dbReference>
<dbReference type="Pfam" id="PF25027">
    <property type="entry name" value="EGF1_RECK"/>
    <property type="match status" value="1"/>
</dbReference>
<dbReference type="Pfam" id="PF22955">
    <property type="entry name" value="EGF2_RECK"/>
    <property type="match status" value="1"/>
</dbReference>
<dbReference type="Pfam" id="PF25028">
    <property type="entry name" value="FnI_RECK"/>
    <property type="match status" value="1"/>
</dbReference>
<dbReference type="Pfam" id="PF23298">
    <property type="entry name" value="FZ_RECK"/>
    <property type="match status" value="1"/>
</dbReference>
<dbReference type="Pfam" id="PF07648">
    <property type="entry name" value="Kazal_2"/>
    <property type="match status" value="3"/>
</dbReference>
<dbReference type="Pfam" id="PF22961">
    <property type="entry name" value="RECK-like_N"/>
    <property type="match status" value="1"/>
</dbReference>
<dbReference type="SMART" id="SM00280">
    <property type="entry name" value="KAZAL"/>
    <property type="match status" value="3"/>
</dbReference>
<dbReference type="SUPFAM" id="SSF100895">
    <property type="entry name" value="Kazal-type serine protease inhibitors"/>
    <property type="match status" value="3"/>
</dbReference>
<dbReference type="PROSITE" id="PS00282">
    <property type="entry name" value="KAZAL_1"/>
    <property type="match status" value="1"/>
</dbReference>
<dbReference type="PROSITE" id="PS51465">
    <property type="entry name" value="KAZAL_2"/>
    <property type="match status" value="3"/>
</dbReference>
<proteinExistence type="evidence at protein level"/>
<name>RECK_CHICK</name>
<gene>
    <name evidence="7" type="primary">RECK</name>
</gene>